<organism>
    <name type="scientific">Saccharomyces cerevisiae (strain ATCC 204508 / S288c)</name>
    <name type="common">Baker's yeast</name>
    <dbReference type="NCBI Taxonomy" id="559292"/>
    <lineage>
        <taxon>Eukaryota</taxon>
        <taxon>Fungi</taxon>
        <taxon>Dikarya</taxon>
        <taxon>Ascomycota</taxon>
        <taxon>Saccharomycotina</taxon>
        <taxon>Saccharomycetes</taxon>
        <taxon>Saccharomycetales</taxon>
        <taxon>Saccharomycetaceae</taxon>
        <taxon>Saccharomyces</taxon>
    </lineage>
</organism>
<proteinExistence type="uncertain"/>
<gene>
    <name type="primary">TY2A-GR1</name>
    <name type="synonym">YGRCTy2-1 GAG</name>
    <name type="ordered locus">YGR038C-E</name>
    <name type="ORF">G4141</name>
</gene>
<evidence type="ECO:0000250" key="1"/>
<evidence type="ECO:0000256" key="2">
    <source>
        <dbReference type="SAM" id="MobiDB-lite"/>
    </source>
</evidence>
<evidence type="ECO:0000305" key="3"/>
<evidence type="ECO:0000305" key="4">
    <source>
    </source>
</evidence>
<evidence type="ECO:0000305" key="5">
    <source>
    </source>
</evidence>
<name>YG21A_YEAST</name>
<dbReference type="EMBL" id="Z72823">
    <property type="protein sequence ID" value="CAA97031.1"/>
    <property type="status" value="ALT_SEQ"/>
    <property type="molecule type" value="Genomic_DNA"/>
</dbReference>
<dbReference type="EMBL" id="Z72824">
    <property type="protein sequence ID" value="CAA97033.1"/>
    <property type="status" value="ALT_SEQ"/>
    <property type="molecule type" value="Genomic_DNA"/>
</dbReference>
<dbReference type="PIR" id="S70229">
    <property type="entry name" value="S70229"/>
</dbReference>
<dbReference type="SMR" id="P0C2J2"/>
<dbReference type="GO" id="GO:0005737">
    <property type="term" value="C:cytoplasm"/>
    <property type="evidence" value="ECO:0007669"/>
    <property type="project" value="UniProtKB-SubCell"/>
</dbReference>
<dbReference type="GO" id="GO:0003723">
    <property type="term" value="F:RNA binding"/>
    <property type="evidence" value="ECO:0007669"/>
    <property type="project" value="UniProtKB-KW"/>
</dbReference>
<dbReference type="InterPro" id="IPR015820">
    <property type="entry name" value="TYA"/>
</dbReference>
<dbReference type="Pfam" id="PF01021">
    <property type="entry name" value="TYA"/>
    <property type="match status" value="1"/>
</dbReference>
<reference key="1">
    <citation type="journal article" date="1997" name="Nature">
        <title>The nucleotide sequence of Saccharomyces cerevisiae chromosome VII.</title>
        <authorList>
            <person name="Tettelin H."/>
            <person name="Agostoni-Carbone M.L."/>
            <person name="Albermann K."/>
            <person name="Albers M."/>
            <person name="Arroyo J."/>
            <person name="Backes U."/>
            <person name="Barreiros T."/>
            <person name="Bertani I."/>
            <person name="Bjourson A.J."/>
            <person name="Brueckner M."/>
            <person name="Bruschi C.V."/>
            <person name="Carignani G."/>
            <person name="Castagnoli L."/>
            <person name="Cerdan E."/>
            <person name="Clemente M.L."/>
            <person name="Coblenz A."/>
            <person name="Coglievina M."/>
            <person name="Coissac E."/>
            <person name="Defoor E."/>
            <person name="Del Bino S."/>
            <person name="Delius H."/>
            <person name="Delneri D."/>
            <person name="de Wergifosse P."/>
            <person name="Dujon B."/>
            <person name="Durand P."/>
            <person name="Entian K.-D."/>
            <person name="Eraso P."/>
            <person name="Escribano V."/>
            <person name="Fabiani L."/>
            <person name="Fartmann B."/>
            <person name="Feroli F."/>
            <person name="Feuermann M."/>
            <person name="Frontali L."/>
            <person name="Garcia-Gonzalez M."/>
            <person name="Garcia-Saez M.I."/>
            <person name="Goffeau A."/>
            <person name="Guerreiro P."/>
            <person name="Hani J."/>
            <person name="Hansen M."/>
            <person name="Hebling U."/>
            <person name="Hernandez K."/>
            <person name="Heumann K."/>
            <person name="Hilger F."/>
            <person name="Hofmann B."/>
            <person name="Indge K.J."/>
            <person name="James C.M."/>
            <person name="Klima R."/>
            <person name="Koetter P."/>
            <person name="Kramer B."/>
            <person name="Kramer W."/>
            <person name="Lauquin G."/>
            <person name="Leuther H."/>
            <person name="Louis E.J."/>
            <person name="Maillier E."/>
            <person name="Marconi A."/>
            <person name="Martegani E."/>
            <person name="Mazon M.J."/>
            <person name="Mazzoni C."/>
            <person name="McReynolds A.D.K."/>
            <person name="Melchioretto P."/>
            <person name="Mewes H.-W."/>
            <person name="Minenkova O."/>
            <person name="Mueller-Auer S."/>
            <person name="Nawrocki A."/>
            <person name="Netter P."/>
            <person name="Neu R."/>
            <person name="Nombela C."/>
            <person name="Oliver S.G."/>
            <person name="Panzeri L."/>
            <person name="Paoluzi S."/>
            <person name="Plevani P."/>
            <person name="Portetelle D."/>
            <person name="Portillo F."/>
            <person name="Potier S."/>
            <person name="Purnelle B."/>
            <person name="Rieger M."/>
            <person name="Riles L."/>
            <person name="Rinaldi T."/>
            <person name="Robben J."/>
            <person name="Rodrigues-Pousada C."/>
            <person name="Rodriguez-Belmonte E."/>
            <person name="Rodriguez-Torres A.M."/>
            <person name="Rose M."/>
            <person name="Ruzzi M."/>
            <person name="Saliola M."/>
            <person name="Sanchez-Perez M."/>
            <person name="Schaefer B."/>
            <person name="Schaefer M."/>
            <person name="Scharfe M."/>
            <person name="Schmidheini T."/>
            <person name="Schreer A."/>
            <person name="Skala J."/>
            <person name="Souciet J.-L."/>
            <person name="Steensma H.Y."/>
            <person name="Talla E."/>
            <person name="Thierry A."/>
            <person name="Vandenbol M."/>
            <person name="van der Aart Q.J.M."/>
            <person name="Van Dyck L."/>
            <person name="Vanoni M."/>
            <person name="Verhasselt P."/>
            <person name="Voet M."/>
            <person name="Volckaert G."/>
            <person name="Wambutt R."/>
            <person name="Watson M.D."/>
            <person name="Weber N."/>
            <person name="Wedler E."/>
            <person name="Wedler H."/>
            <person name="Wipfli P."/>
            <person name="Wolf K."/>
            <person name="Wright L.F."/>
            <person name="Zaccaria P."/>
            <person name="Zimmermann M."/>
            <person name="Zollner A."/>
            <person name="Kleine K."/>
        </authorList>
    </citation>
    <scope>NUCLEOTIDE SEQUENCE [LARGE SCALE GENOMIC DNA]</scope>
    <source>
        <strain>ATCC 204508 / S288c</strain>
    </source>
</reference>
<reference key="2">
    <citation type="journal article" date="2014" name="G3 (Bethesda)">
        <title>The reference genome sequence of Saccharomyces cerevisiae: Then and now.</title>
        <authorList>
            <person name="Engel S.R."/>
            <person name="Dietrich F.S."/>
            <person name="Fisk D.G."/>
            <person name="Binkley G."/>
            <person name="Balakrishnan R."/>
            <person name="Costanzo M.C."/>
            <person name="Dwight S.S."/>
            <person name="Hitz B.C."/>
            <person name="Karra K."/>
            <person name="Nash R.S."/>
            <person name="Weng S."/>
            <person name="Wong E.D."/>
            <person name="Lloyd P."/>
            <person name="Skrzypek M.S."/>
            <person name="Miyasato S.R."/>
            <person name="Simison M."/>
            <person name="Cherry J.M."/>
        </authorList>
    </citation>
    <scope>GENOME REANNOTATION</scope>
    <source>
        <strain>ATCC 204508 / S288c</strain>
    </source>
</reference>
<reference key="3">
    <citation type="journal article" date="1998" name="Genome Res.">
        <title>Transposable elements and genome organization: a comprehensive survey of retrotransposons revealed by the complete Saccharomyces cerevisiae genome sequence.</title>
        <authorList>
            <person name="Kim J.M."/>
            <person name="Vanguri S."/>
            <person name="Boeke J.D."/>
            <person name="Gabriel A."/>
            <person name="Voytas D.F."/>
        </authorList>
    </citation>
    <scope>NOMENCLATURE</scope>
</reference>
<reference key="4">
    <citation type="journal article" date="2005" name="Cytogenet. Genome Res.">
        <title>Happy together: the life and times of Ty retrotransposons and their hosts.</title>
        <authorList>
            <person name="Lesage P."/>
            <person name="Todeschini A.L."/>
        </authorList>
    </citation>
    <scope>REVIEW</scope>
    <scope>IDENTIFICATION AS PSEUDOGENE</scope>
</reference>
<sequence length="438" mass="49772">MESQQLHQNPHSLHGSAYASVTSKEVPSNQDPLAVSASNLPEFDRDSTKVNSQQETTPGTSAVPENHHHVSPQPASVPPPQNGQYQQHGMMTPNKAMASNWAHYQQPSMMTCSHYQTSPAYYQPDPHYPLPQYIPPLSTSSPDPIDLKNQHSEIPQAKTKVGNNVLPPHTLTSEENFSTWVKFYIRFLKNSNLGDIIPNDQGEIKRQMTYEEHAYIYNTFQAFAPFHLLPTWVKQILEINYADILTVLCKSVSKMQTNNQELKDWIALANLEYDGSTSADTFEITVSTIIQRLKENNINVSDRLACQLILKGLSGDFKYLRNQYRTKTNMKLSQLFAEIQLIYDENKIMNLNKPSQYKQHSEYKNVSRTSPNTTNTKVTTRNYHRTNSSKPRAAKAHNIATSSKFSRVNNDHINESTVSSQYLSDDDELSLRPATERI</sequence>
<comment type="function">
    <text evidence="1">Capsid protein (CA) is the structural component of the virus-like particle (VLP), forming the shell that encapsulates the retrotransposons dimeric RNA genome. The particles are assembled from trimer-clustered units and there are holes in the capsid shells that allow for the diffusion of macromolecules. CA also has nucleocapsid-like chaperone activity, promoting primer tRNA(i)-Met annealing to the multipartite primer-binding site (PBS), dimerization of Ty2 RNA and initiation of reverse transcription (By similarity).</text>
</comment>
<comment type="subunit">
    <text evidence="1">Homotrimer.</text>
</comment>
<comment type="subcellular location">
    <subcellularLocation>
        <location evidence="1">Cytoplasm</location>
    </subcellularLocation>
</comment>
<comment type="domain">
    <text evidence="1">The C-terminal RNA-binding region of CA is sufficient for all its nucleocapsid-like chaperone activities.</text>
</comment>
<comment type="miscellaneous">
    <text>Retrotransposons are mobile genetic entities that are able to replicate via an RNA intermediate and a reverse transcription step. In contrast to retroviruses, retrotransposons are non-infectious, lack an envelope and remain intracellular. Ty2 retrotransposons belong to the copia elements (pseudoviridae).</text>
</comment>
<comment type="caution">
    <text evidence="4 5">Could be the product of a pseudogene unlikely to encode a functional protein. Transposon Ty2-GR1 (YGRCTy2-1) has a stop codon at position 28, which disrupts the gene coding for this protein. Because of that it is not part of the S.cerevisiae S288c complete/reference proteome set.</text>
</comment>
<comment type="sequence caution" evidence="3">
    <conflict type="erroneous termination">
        <sequence resource="EMBL-CDS" id="CAA97031"/>
    </conflict>
    <text>Truncated C-terminus.</text>
</comment>
<comment type="sequence caution" evidence="3">
    <conflict type="erroneous termination">
        <sequence resource="EMBL-CDS" id="CAA97033"/>
    </conflict>
    <text>Truncated C-terminus.</text>
</comment>
<accession>P0C2J2</accession>
<protein>
    <recommendedName>
        <fullName>Transposon Ty2-GR1 Gag polyprotein</fullName>
        <shortName>TY2A</shortName>
        <shortName>TYA</shortName>
        <shortName>Transposon Ty2 protein A</shortName>
    </recommendedName>
    <component>
        <recommendedName>
            <fullName>Capsid protein</fullName>
            <shortName>CA</shortName>
        </recommendedName>
    </component>
    <component>
        <recommendedName>
            <fullName>Gag-p4</fullName>
        </recommendedName>
    </component>
</protein>
<keyword id="KW-0963">Cytoplasm</keyword>
<keyword id="KW-0694">RNA-binding</keyword>
<keyword id="KW-0814">Transposable element</keyword>
<feature type="chain" id="PRO_0000279321" description="Transposon Ty2-GR1 Gag polyprotein">
    <location>
        <begin position="1"/>
        <end position="438"/>
    </location>
</feature>
<feature type="chain" id="PRO_0000279322" description="Capsid protein" evidence="1">
    <location>
        <begin position="1"/>
        <end position="397"/>
    </location>
</feature>
<feature type="peptide" id="PRO_0000279323" description="Gag-p4" evidence="1">
    <location>
        <begin position="398"/>
        <end position="438"/>
    </location>
</feature>
<feature type="region of interest" description="Disordered" evidence="2">
    <location>
        <begin position="1"/>
        <end position="86"/>
    </location>
</feature>
<feature type="region of interest" description="RNA-binding" evidence="1">
    <location>
        <begin position="295"/>
        <end position="397"/>
    </location>
</feature>
<feature type="region of interest" description="Disordered" evidence="2">
    <location>
        <begin position="360"/>
        <end position="403"/>
    </location>
</feature>
<feature type="region of interest" description="Disordered" evidence="2">
    <location>
        <begin position="418"/>
        <end position="438"/>
    </location>
</feature>
<feature type="compositionally biased region" description="Polar residues" evidence="2">
    <location>
        <begin position="1"/>
        <end position="11"/>
    </location>
</feature>
<feature type="compositionally biased region" description="Polar residues" evidence="2">
    <location>
        <begin position="19"/>
        <end position="39"/>
    </location>
</feature>
<feature type="compositionally biased region" description="Polar residues" evidence="2">
    <location>
        <begin position="49"/>
        <end position="60"/>
    </location>
</feature>
<feature type="compositionally biased region" description="Low complexity" evidence="2">
    <location>
        <begin position="369"/>
        <end position="381"/>
    </location>
</feature>
<feature type="site" description="Cleavage; by Ty2 protease" evidence="1">
    <location>
        <begin position="397"/>
        <end position="398"/>
    </location>
</feature>